<evidence type="ECO:0000255" key="1">
    <source>
        <dbReference type="HAMAP-Rule" id="MF_00671"/>
    </source>
</evidence>
<dbReference type="EMBL" id="CP000948">
    <property type="protein sequence ID" value="ACB01949.1"/>
    <property type="molecule type" value="Genomic_DNA"/>
</dbReference>
<dbReference type="RefSeq" id="WP_001295307.1">
    <property type="nucleotide sequence ID" value="NC_010473.1"/>
</dbReference>
<dbReference type="SMR" id="B1X6S1"/>
<dbReference type="GeneID" id="93776744"/>
<dbReference type="KEGG" id="ecd:ECDH10B_0807"/>
<dbReference type="HOGENOM" id="CLU_047123_0_0_6"/>
<dbReference type="GO" id="GO:0042597">
    <property type="term" value="C:periplasmic space"/>
    <property type="evidence" value="ECO:0007669"/>
    <property type="project" value="UniProtKB-SubCell"/>
</dbReference>
<dbReference type="GO" id="GO:0051301">
    <property type="term" value="P:cell division"/>
    <property type="evidence" value="ECO:0007669"/>
    <property type="project" value="UniProtKB-UniRule"/>
</dbReference>
<dbReference type="GO" id="GO:0017038">
    <property type="term" value="P:protein import"/>
    <property type="evidence" value="ECO:0007669"/>
    <property type="project" value="InterPro"/>
</dbReference>
<dbReference type="FunFam" id="2.120.10.30:FF:000022">
    <property type="entry name" value="Tol-Pal system protein TolB"/>
    <property type="match status" value="1"/>
</dbReference>
<dbReference type="FunFam" id="3.40.50.10070:FF:000001">
    <property type="entry name" value="Tol-Pal system protein TolB"/>
    <property type="match status" value="1"/>
</dbReference>
<dbReference type="Gene3D" id="2.120.10.30">
    <property type="entry name" value="TolB, C-terminal domain"/>
    <property type="match status" value="1"/>
</dbReference>
<dbReference type="Gene3D" id="3.40.50.10070">
    <property type="entry name" value="TolB, N-terminal domain"/>
    <property type="match status" value="1"/>
</dbReference>
<dbReference type="HAMAP" id="MF_00671">
    <property type="entry name" value="TolB"/>
    <property type="match status" value="1"/>
</dbReference>
<dbReference type="InterPro" id="IPR011042">
    <property type="entry name" value="6-blade_b-propeller_TolB-like"/>
</dbReference>
<dbReference type="InterPro" id="IPR011659">
    <property type="entry name" value="PD40"/>
</dbReference>
<dbReference type="InterPro" id="IPR014167">
    <property type="entry name" value="Tol-Pal_TolB"/>
</dbReference>
<dbReference type="InterPro" id="IPR007195">
    <property type="entry name" value="TolB_N"/>
</dbReference>
<dbReference type="NCBIfam" id="TIGR02800">
    <property type="entry name" value="propeller_TolB"/>
    <property type="match status" value="1"/>
</dbReference>
<dbReference type="PANTHER" id="PTHR36842:SF1">
    <property type="entry name" value="PROTEIN TOLB"/>
    <property type="match status" value="1"/>
</dbReference>
<dbReference type="PANTHER" id="PTHR36842">
    <property type="entry name" value="PROTEIN TOLB HOMOLOG"/>
    <property type="match status" value="1"/>
</dbReference>
<dbReference type="Pfam" id="PF07676">
    <property type="entry name" value="PD40"/>
    <property type="match status" value="4"/>
</dbReference>
<dbReference type="Pfam" id="PF04052">
    <property type="entry name" value="TolB_N"/>
    <property type="match status" value="1"/>
</dbReference>
<dbReference type="SUPFAM" id="SSF52964">
    <property type="entry name" value="TolB, N-terminal domain"/>
    <property type="match status" value="1"/>
</dbReference>
<dbReference type="SUPFAM" id="SSF69304">
    <property type="entry name" value="Tricorn protease N-terminal domain"/>
    <property type="match status" value="1"/>
</dbReference>
<feature type="signal peptide" evidence="1">
    <location>
        <begin position="1"/>
        <end position="21"/>
    </location>
</feature>
<feature type="chain" id="PRO_1000131526" description="Tol-Pal system protein TolB" evidence="1">
    <location>
        <begin position="22"/>
        <end position="430"/>
    </location>
</feature>
<sequence>MKQALRVAFGFLILWASVLHAEVRIVIDSGVDSGRPIGVVPFQWAGPGAAPEDIGGIVAADLRNSGKFNPLDRARLPQQPGSAQEVQPAAWSALGIDAVVVGQVTPNPDGSYNVAYQLVDTGGAPGTVLAQNSYKVNKQWLRYAGHTASDEVFEKLTGIKGAFRTRIAYVVQTNGGQFPYELRVSDYDGYNQFVVHRSPQPLMSPAWSPDGSKLAYVTFESGRSALVIQTLANGAVRQVASFPRHNGAPAFSPDGSKLAFALSKTGSLNLYVMDLASGQIRQVTDGRSNNTEPTWFPDSQNLAFTSDQAGRPQVYKVNINGGAPQRITWEGSQNQDADVSSDGKFMVMVSSNGGQQHIAKQDLATGGVQVLSSTFLDETPSLAPNGTMVIYSSSQGMGSVLNLVSTDGRFKARLPATDGQVKFPAWSPYL</sequence>
<gene>
    <name evidence="1" type="primary">tolB</name>
    <name type="ordered locus">ECDH10B_0807</name>
</gene>
<reference key="1">
    <citation type="journal article" date="2008" name="J. Bacteriol.">
        <title>The complete genome sequence of Escherichia coli DH10B: insights into the biology of a laboratory workhorse.</title>
        <authorList>
            <person name="Durfee T."/>
            <person name="Nelson R."/>
            <person name="Baldwin S."/>
            <person name="Plunkett G. III"/>
            <person name="Burland V."/>
            <person name="Mau B."/>
            <person name="Petrosino J.F."/>
            <person name="Qin X."/>
            <person name="Muzny D.M."/>
            <person name="Ayele M."/>
            <person name="Gibbs R.A."/>
            <person name="Csorgo B."/>
            <person name="Posfai G."/>
            <person name="Weinstock G.M."/>
            <person name="Blattner F.R."/>
        </authorList>
    </citation>
    <scope>NUCLEOTIDE SEQUENCE [LARGE SCALE GENOMIC DNA]</scope>
    <source>
        <strain>K12 / DH10B</strain>
    </source>
</reference>
<accession>B1X6S1</accession>
<keyword id="KW-0131">Cell cycle</keyword>
<keyword id="KW-0132">Cell division</keyword>
<keyword id="KW-0574">Periplasm</keyword>
<keyword id="KW-0732">Signal</keyword>
<name>TOLB_ECODH</name>
<proteinExistence type="inferred from homology"/>
<comment type="function">
    <text evidence="1">Part of the Tol-Pal system, which plays a role in outer membrane invagination during cell division and is important for maintaining outer membrane integrity. TolB occupies a key intermediary position in the Tol-Pal system because it communicates directly with both membrane-embedded components, Pal in the outer membrane and TolA in the inner membrane.</text>
</comment>
<comment type="subunit">
    <text evidence="1">The Tol-Pal system is composed of five core proteins: the inner membrane proteins TolA, TolQ and TolR, the periplasmic protein TolB and the outer membrane protein Pal. They form a network linking the inner and outer membranes and the peptidoglycan layer.</text>
</comment>
<comment type="subcellular location">
    <subcellularLocation>
        <location evidence="1">Periplasm</location>
    </subcellularLocation>
</comment>
<comment type="similarity">
    <text evidence="1">Belongs to the TolB family.</text>
</comment>
<protein>
    <recommendedName>
        <fullName evidence="1">Tol-Pal system protein TolB</fullName>
    </recommendedName>
</protein>
<organism>
    <name type="scientific">Escherichia coli (strain K12 / DH10B)</name>
    <dbReference type="NCBI Taxonomy" id="316385"/>
    <lineage>
        <taxon>Bacteria</taxon>
        <taxon>Pseudomonadati</taxon>
        <taxon>Pseudomonadota</taxon>
        <taxon>Gammaproteobacteria</taxon>
        <taxon>Enterobacterales</taxon>
        <taxon>Enterobacteriaceae</taxon>
        <taxon>Escherichia</taxon>
    </lineage>
</organism>